<sequence>MVEPDMQKKASGGSGGSEMDTLNATSNSSKQGVSNNKRNPVSKKKPGNKVSDGRDNAHNYHGEGRRKSSKQQRSRTPYKETSTRINDQDIDLSIQEEILGGNFKLRGRKTQVSINHLLNFQLPEVEREKSRSSSSKKSNRRRDEHVHLHGDTFVNVNYRLLVDDRFDYPEQNCNPNVPVDQEKILRVIVPKGQNCSICLSEEPVAPRMVTCGHIFCLSCLLNFFSIEETVKNKETGYSKKKKYKECPLCGSIIGPKRVKPVLYEDDFDVTRLNQKPEPGATVHLQLMCKPHGSLLPLPVALHLDPLKCGNFPPANLGSIKHYAHIMKCGVSYSLELYQKDIVAIQEQYEIDKAIYNDSGKFVKQSIENINDQISTLLAATTDLSPLSNDINNGLDNFHFDDDLLTKYDDSSAYFFYQTLVASSTKYFLSPLDVKILLTIFHYYSKFPESIETTVENIHYDTVVTEQLIRRYKYIGHLPIGTEIALLDLDWRKIPFLPKEIYEQFAHELKQRRRKFTMKKQKEDKEKKLYEKRLEQEHAEFYRKENGNSLKFEDSVQMATHYESIVSSSIPLNSLGISMLGPPTNSCSTPQKQAPSHTKRTIWGTSIAVTEDEKASKENKEFQDMLLQRIRQEDSSDVTDSTDSPPTSNGKRGRKKKGKVMLFSSNHQALG</sequence>
<name>MAG2_YEAST</name>
<evidence type="ECO:0000255" key="1">
    <source>
        <dbReference type="PROSITE-ProRule" id="PRU00175"/>
    </source>
</evidence>
<evidence type="ECO:0000256" key="2">
    <source>
        <dbReference type="SAM" id="MobiDB-lite"/>
    </source>
</evidence>
<evidence type="ECO:0000269" key="3">
    <source>
    </source>
</evidence>
<evidence type="ECO:0000269" key="4">
    <source>
    </source>
</evidence>
<evidence type="ECO:0000269" key="5">
    <source>
    </source>
</evidence>
<evidence type="ECO:0000303" key="6">
    <source>
    </source>
</evidence>
<evidence type="ECO:0000305" key="7"/>
<dbReference type="EC" id="2.3.2.27" evidence="5"/>
<dbReference type="EMBL" id="U20939">
    <property type="protein sequence ID" value="AAB67504.1"/>
    <property type="molecule type" value="Genomic_DNA"/>
</dbReference>
<dbReference type="EMBL" id="AY692728">
    <property type="protein sequence ID" value="AAT92747.1"/>
    <property type="molecule type" value="Genomic_DNA"/>
</dbReference>
<dbReference type="EMBL" id="BK006945">
    <property type="protein sequence ID" value="DAA09729.1"/>
    <property type="molecule type" value="Genomic_DNA"/>
</dbReference>
<dbReference type="PIR" id="S53414">
    <property type="entry name" value="S53414"/>
</dbReference>
<dbReference type="RefSeq" id="NP_013531.3">
    <property type="nucleotide sequence ID" value="NM_001182315.3"/>
</dbReference>
<dbReference type="BioGRID" id="31687">
    <property type="interactions" value="86"/>
</dbReference>
<dbReference type="DIP" id="DIP-4633N"/>
<dbReference type="FunCoup" id="Q06436">
    <property type="interactions" value="674"/>
</dbReference>
<dbReference type="IntAct" id="Q06436">
    <property type="interactions" value="40"/>
</dbReference>
<dbReference type="STRING" id="4932.YLR427W"/>
<dbReference type="iPTMnet" id="Q06436"/>
<dbReference type="PaxDb" id="4932-YLR427W"/>
<dbReference type="PeptideAtlas" id="Q06436"/>
<dbReference type="EnsemblFungi" id="YLR427W_mRNA">
    <property type="protein sequence ID" value="YLR427W"/>
    <property type="gene ID" value="YLR427W"/>
</dbReference>
<dbReference type="GeneID" id="851147"/>
<dbReference type="KEGG" id="sce:YLR427W"/>
<dbReference type="AGR" id="SGD:S000004419"/>
<dbReference type="SGD" id="S000004419">
    <property type="gene designation" value="MAG2"/>
</dbReference>
<dbReference type="VEuPathDB" id="FungiDB:YLR427W"/>
<dbReference type="eggNOG" id="KOG2164">
    <property type="taxonomic scope" value="Eukaryota"/>
</dbReference>
<dbReference type="GeneTree" id="ENSGT00390000001731"/>
<dbReference type="HOGENOM" id="CLU_011811_0_0_1"/>
<dbReference type="InParanoid" id="Q06436"/>
<dbReference type="OMA" id="PRWKKCP"/>
<dbReference type="OrthoDB" id="302966at2759"/>
<dbReference type="BioCyc" id="YEAST:G3O-32487-MONOMER"/>
<dbReference type="UniPathway" id="UPA00143"/>
<dbReference type="BioGRID-ORCS" id="851147">
    <property type="hits" value="0 hits in 10 CRISPR screens"/>
</dbReference>
<dbReference type="PRO" id="PR:Q06436"/>
<dbReference type="Proteomes" id="UP000002311">
    <property type="component" value="Chromosome XII"/>
</dbReference>
<dbReference type="RNAct" id="Q06436">
    <property type="molecule type" value="protein"/>
</dbReference>
<dbReference type="GO" id="GO:0005737">
    <property type="term" value="C:cytoplasm"/>
    <property type="evidence" value="ECO:0007005"/>
    <property type="project" value="SGD"/>
</dbReference>
<dbReference type="GO" id="GO:0022626">
    <property type="term" value="C:cytosolic ribosome"/>
    <property type="evidence" value="ECO:0000314"/>
    <property type="project" value="UniProt"/>
</dbReference>
<dbReference type="GO" id="GO:0000976">
    <property type="term" value="F:transcription cis-regulatory region binding"/>
    <property type="evidence" value="ECO:0000318"/>
    <property type="project" value="GO_Central"/>
</dbReference>
<dbReference type="GO" id="GO:0061630">
    <property type="term" value="F:ubiquitin protein ligase activity"/>
    <property type="evidence" value="ECO:0000314"/>
    <property type="project" value="UniProtKB"/>
</dbReference>
<dbReference type="GO" id="GO:0008270">
    <property type="term" value="F:zinc ion binding"/>
    <property type="evidence" value="ECO:0007669"/>
    <property type="project" value="UniProtKB-KW"/>
</dbReference>
<dbReference type="GO" id="GO:0070651">
    <property type="term" value="P:nonfunctional rRNA decay"/>
    <property type="evidence" value="ECO:0000314"/>
    <property type="project" value="UniProt"/>
</dbReference>
<dbReference type="GO" id="GO:0045944">
    <property type="term" value="P:positive regulation of transcription by RNA polymerase II"/>
    <property type="evidence" value="ECO:0000318"/>
    <property type="project" value="GO_Central"/>
</dbReference>
<dbReference type="GO" id="GO:0006513">
    <property type="term" value="P:protein monoubiquitination"/>
    <property type="evidence" value="ECO:0000314"/>
    <property type="project" value="UniProtKB"/>
</dbReference>
<dbReference type="CDD" id="cd16536">
    <property type="entry name" value="RING-HC_RNF10"/>
    <property type="match status" value="1"/>
</dbReference>
<dbReference type="FunFam" id="3.30.40.10:FF:000595">
    <property type="entry name" value="MAG2p Cytoplasmic protein"/>
    <property type="match status" value="1"/>
</dbReference>
<dbReference type="Gene3D" id="3.30.40.10">
    <property type="entry name" value="Zinc/RING finger domain, C3HC4 (zinc finger)"/>
    <property type="match status" value="1"/>
</dbReference>
<dbReference type="InterPro" id="IPR039739">
    <property type="entry name" value="MAG2/RNF10"/>
</dbReference>
<dbReference type="InterPro" id="IPR027370">
    <property type="entry name" value="Znf-RING_euk"/>
</dbReference>
<dbReference type="InterPro" id="IPR001841">
    <property type="entry name" value="Znf_RING"/>
</dbReference>
<dbReference type="InterPro" id="IPR013083">
    <property type="entry name" value="Znf_RING/FYVE/PHD"/>
</dbReference>
<dbReference type="InterPro" id="IPR017907">
    <property type="entry name" value="Znf_RING_CS"/>
</dbReference>
<dbReference type="PANTHER" id="PTHR12983:SF9">
    <property type="entry name" value="E3 UBIQUITIN-PROTEIN LIGASE RNF10"/>
    <property type="match status" value="1"/>
</dbReference>
<dbReference type="PANTHER" id="PTHR12983">
    <property type="entry name" value="RING FINGER 10 FAMILY MEMBER"/>
    <property type="match status" value="1"/>
</dbReference>
<dbReference type="Pfam" id="PF13445">
    <property type="entry name" value="zf-RING_UBOX"/>
    <property type="match status" value="1"/>
</dbReference>
<dbReference type="SMART" id="SM00184">
    <property type="entry name" value="RING"/>
    <property type="match status" value="1"/>
</dbReference>
<dbReference type="SUPFAM" id="SSF57850">
    <property type="entry name" value="RING/U-box"/>
    <property type="match status" value="1"/>
</dbReference>
<dbReference type="PROSITE" id="PS00518">
    <property type="entry name" value="ZF_RING_1"/>
    <property type="match status" value="1"/>
</dbReference>
<dbReference type="PROSITE" id="PS50089">
    <property type="entry name" value="ZF_RING_2"/>
    <property type="match status" value="1"/>
</dbReference>
<reference key="1">
    <citation type="journal article" date="1997" name="Nature">
        <title>The nucleotide sequence of Saccharomyces cerevisiae chromosome XII.</title>
        <authorList>
            <person name="Johnston M."/>
            <person name="Hillier L.W."/>
            <person name="Riles L."/>
            <person name="Albermann K."/>
            <person name="Andre B."/>
            <person name="Ansorge W."/>
            <person name="Benes V."/>
            <person name="Brueckner M."/>
            <person name="Delius H."/>
            <person name="Dubois E."/>
            <person name="Duesterhoeft A."/>
            <person name="Entian K.-D."/>
            <person name="Floeth M."/>
            <person name="Goffeau A."/>
            <person name="Hebling U."/>
            <person name="Heumann K."/>
            <person name="Heuss-Neitzel D."/>
            <person name="Hilbert H."/>
            <person name="Hilger F."/>
            <person name="Kleine K."/>
            <person name="Koetter P."/>
            <person name="Louis E.J."/>
            <person name="Messenguy F."/>
            <person name="Mewes H.-W."/>
            <person name="Miosga T."/>
            <person name="Moestl D."/>
            <person name="Mueller-Auer S."/>
            <person name="Nentwich U."/>
            <person name="Obermaier B."/>
            <person name="Piravandi E."/>
            <person name="Pohl T.M."/>
            <person name="Portetelle D."/>
            <person name="Purnelle B."/>
            <person name="Rechmann S."/>
            <person name="Rieger M."/>
            <person name="Rinke M."/>
            <person name="Rose M."/>
            <person name="Scharfe M."/>
            <person name="Scherens B."/>
            <person name="Scholler P."/>
            <person name="Schwager C."/>
            <person name="Schwarz S."/>
            <person name="Underwood A.P."/>
            <person name="Urrestarazu L.A."/>
            <person name="Vandenbol M."/>
            <person name="Verhasselt P."/>
            <person name="Vierendeels F."/>
            <person name="Voet M."/>
            <person name="Volckaert G."/>
            <person name="Voss H."/>
            <person name="Wambutt R."/>
            <person name="Wedler E."/>
            <person name="Wedler H."/>
            <person name="Zimmermann F.K."/>
            <person name="Zollner A."/>
            <person name="Hani J."/>
            <person name="Hoheisel J.D."/>
        </authorList>
    </citation>
    <scope>NUCLEOTIDE SEQUENCE [LARGE SCALE GENOMIC DNA]</scope>
    <source>
        <strain>ATCC 204508 / S288c</strain>
    </source>
</reference>
<reference key="2">
    <citation type="journal article" date="2014" name="G3 (Bethesda)">
        <title>The reference genome sequence of Saccharomyces cerevisiae: Then and now.</title>
        <authorList>
            <person name="Engel S.R."/>
            <person name="Dietrich F.S."/>
            <person name="Fisk D.G."/>
            <person name="Binkley G."/>
            <person name="Balakrishnan R."/>
            <person name="Costanzo M.C."/>
            <person name="Dwight S.S."/>
            <person name="Hitz B.C."/>
            <person name="Karra K."/>
            <person name="Nash R.S."/>
            <person name="Weng S."/>
            <person name="Wong E.D."/>
            <person name="Lloyd P."/>
            <person name="Skrzypek M.S."/>
            <person name="Miyasato S.R."/>
            <person name="Simison M."/>
            <person name="Cherry J.M."/>
        </authorList>
    </citation>
    <scope>GENOME REANNOTATION</scope>
    <source>
        <strain>ATCC 204508 / S288c</strain>
    </source>
</reference>
<reference key="3">
    <citation type="journal article" date="2007" name="Genome Res.">
        <title>Approaching a complete repository of sequence-verified protein-encoding clones for Saccharomyces cerevisiae.</title>
        <authorList>
            <person name="Hu Y."/>
            <person name="Rolfs A."/>
            <person name="Bhullar B."/>
            <person name="Murthy T.V.S."/>
            <person name="Zhu C."/>
            <person name="Berger M.F."/>
            <person name="Camargo A.A."/>
            <person name="Kelley F."/>
            <person name="McCarron S."/>
            <person name="Jepson D."/>
            <person name="Richardson A."/>
            <person name="Raphael J."/>
            <person name="Moreira D."/>
            <person name="Taycher E."/>
            <person name="Zuo D."/>
            <person name="Mohr S."/>
            <person name="Kane M.F."/>
            <person name="Williamson J."/>
            <person name="Simpson A.J.G."/>
            <person name="Bulyk M.L."/>
            <person name="Harlow E."/>
            <person name="Marsischky G."/>
            <person name="Kolodner R.D."/>
            <person name="LaBaer J."/>
        </authorList>
    </citation>
    <scope>NUCLEOTIDE SEQUENCE [GENOMIC DNA]</scope>
    <source>
        <strain>ATCC 204508 / S288c</strain>
    </source>
</reference>
<reference key="4">
    <citation type="journal article" date="2003" name="Nature">
        <title>Global analysis of protein localization in budding yeast.</title>
        <authorList>
            <person name="Huh W.-K."/>
            <person name="Falvo J.V."/>
            <person name="Gerke L.C."/>
            <person name="Carroll A.S."/>
            <person name="Howson R.W."/>
            <person name="Weissman J.S."/>
            <person name="O'Shea E.K."/>
        </authorList>
    </citation>
    <scope>SUBCELLULAR LOCATION [LARGE SCALE ANALYSIS]</scope>
</reference>
<reference key="5">
    <citation type="journal article" date="2003" name="Nature">
        <title>Global analysis of protein expression in yeast.</title>
        <authorList>
            <person name="Ghaemmaghami S."/>
            <person name="Huh W.-K."/>
            <person name="Bower K."/>
            <person name="Howson R.W."/>
            <person name="Belle A."/>
            <person name="Dephoure N."/>
            <person name="O'Shea E.K."/>
            <person name="Weissman J.S."/>
        </authorList>
    </citation>
    <scope>LEVEL OF PROTEIN EXPRESSION [LARGE SCALE ANALYSIS]</scope>
</reference>
<reference key="6">
    <citation type="journal article" date="2019" name="Cell Rep.">
        <title>Sequential ubiquitination of ribosomal protein uS3 triggers the degradation of non-functional 18S rRNA.</title>
        <authorList>
            <person name="Sugiyama T."/>
            <person name="Li S."/>
            <person name="Kato M."/>
            <person name="Ikeuchi K."/>
            <person name="Ichimura A."/>
            <person name="Matsuo Y."/>
            <person name="Inada T."/>
        </authorList>
    </citation>
    <scope>FUNCTION</scope>
    <scope>CATALYTIC ACTIVITY</scope>
    <scope>PATHWAY</scope>
    <scope>MUTAGENESIS OF 195-CYS--CYS-198</scope>
</reference>
<feature type="chain" id="PRO_0000257809" description="E3 ubiquitin-protein ligase MAG2">
    <location>
        <begin position="1"/>
        <end position="670"/>
    </location>
</feature>
<feature type="zinc finger region" description="RING-type" evidence="1">
    <location>
        <begin position="195"/>
        <end position="250"/>
    </location>
</feature>
<feature type="region of interest" description="Disordered" evidence="2">
    <location>
        <begin position="1"/>
        <end position="84"/>
    </location>
</feature>
<feature type="region of interest" description="Disordered" evidence="2">
    <location>
        <begin position="124"/>
        <end position="145"/>
    </location>
</feature>
<feature type="region of interest" description="Disordered" evidence="2">
    <location>
        <begin position="609"/>
        <end position="670"/>
    </location>
</feature>
<feature type="compositionally biased region" description="Polar residues" evidence="2">
    <location>
        <begin position="20"/>
        <end position="39"/>
    </location>
</feature>
<feature type="compositionally biased region" description="Basic and acidic residues" evidence="2">
    <location>
        <begin position="51"/>
        <end position="66"/>
    </location>
</feature>
<feature type="compositionally biased region" description="Basic and acidic residues" evidence="2">
    <location>
        <begin position="610"/>
        <end position="622"/>
    </location>
</feature>
<feature type="compositionally biased region" description="Low complexity" evidence="2">
    <location>
        <begin position="637"/>
        <end position="649"/>
    </location>
</feature>
<feature type="mutagenesis site" description="Abolished E3 ubiquitin-protein ligase activity." evidence="5">
    <original>CSIC</original>
    <variation>SSIS</variation>
    <location>
        <begin position="195"/>
        <end position="198"/>
    </location>
</feature>
<gene>
    <name evidence="6" type="primary">MAG2</name>
    <name type="ordered locus">YLR427W</name>
</gene>
<organism>
    <name type="scientific">Saccharomyces cerevisiae (strain ATCC 204508 / S288c)</name>
    <name type="common">Baker's yeast</name>
    <dbReference type="NCBI Taxonomy" id="559292"/>
    <lineage>
        <taxon>Eukaryota</taxon>
        <taxon>Fungi</taxon>
        <taxon>Dikarya</taxon>
        <taxon>Ascomycota</taxon>
        <taxon>Saccharomycotina</taxon>
        <taxon>Saccharomycetes</taxon>
        <taxon>Saccharomycetales</taxon>
        <taxon>Saccharomycetaceae</taxon>
        <taxon>Saccharomyces</taxon>
    </lineage>
</organism>
<keyword id="KW-0963">Cytoplasm</keyword>
<keyword id="KW-0479">Metal-binding</keyword>
<keyword id="KW-1185">Reference proteome</keyword>
<keyword id="KW-0808">Transferase</keyword>
<keyword id="KW-0833">Ubl conjugation pathway</keyword>
<keyword id="KW-0862">Zinc</keyword>
<keyword id="KW-0863">Zinc-finger</keyword>
<accession>Q06436</accession>
<accession>D6VZ63</accession>
<protein>
    <recommendedName>
        <fullName evidence="7">E3 ubiquitin-protein ligase MAG2</fullName>
        <ecNumber evidence="5">2.3.2.27</ecNumber>
    </recommendedName>
</protein>
<proteinExistence type="evidence at protein level"/>
<comment type="function">
    <text evidence="5">E3 ubiquitin-protein ligase involved in the degradation of non-functional 18S rRNAs in response to stalled ribosomes (PubMed:30893611). Catalyzes monoubiquitination of RPS3/uS3 in response to stalled ribosomes, initiating a HEL2-dependent response that activates the degradation of non-functional 18S rRNAs (PubMed:30893611).</text>
</comment>
<comment type="catalytic activity">
    <reaction evidence="5">
        <text>S-ubiquitinyl-[E2 ubiquitin-conjugating enzyme]-L-cysteine + [acceptor protein]-L-lysine = [E2 ubiquitin-conjugating enzyme]-L-cysteine + N(6)-ubiquitinyl-[acceptor protein]-L-lysine.</text>
        <dbReference type="EC" id="2.3.2.27"/>
    </reaction>
</comment>
<comment type="pathway">
    <text evidence="5">Protein modification; protein ubiquitination.</text>
</comment>
<comment type="subcellular location">
    <subcellularLocation>
        <location evidence="3">Cytoplasm</location>
    </subcellularLocation>
</comment>
<comment type="miscellaneous">
    <text evidence="4">Present with 922 molecules/cell in log phase SD medium.</text>
</comment>
<comment type="similarity">
    <text evidence="7">Belongs to the RNF10 family.</text>
</comment>